<organism>
    <name type="scientific">Aromatoleum aromaticum (strain DSM 19018 / LMG 30748 / EbN1)</name>
    <name type="common">Azoarcus sp. (strain EbN1)</name>
    <dbReference type="NCBI Taxonomy" id="76114"/>
    <lineage>
        <taxon>Bacteria</taxon>
        <taxon>Pseudomonadati</taxon>
        <taxon>Pseudomonadota</taxon>
        <taxon>Betaproteobacteria</taxon>
        <taxon>Rhodocyclales</taxon>
        <taxon>Rhodocyclaceae</taxon>
        <taxon>Aromatoleum</taxon>
    </lineage>
</organism>
<gene>
    <name type="ordered locus">AZOSEA06390</name>
    <name type="ORF">ebA1202</name>
</gene>
<accession>Q5P7F0</accession>
<dbReference type="EMBL" id="CR555306">
    <property type="protein sequence ID" value="CAI06761.1"/>
    <property type="molecule type" value="Genomic_DNA"/>
</dbReference>
<dbReference type="RefSeq" id="WP_011236490.1">
    <property type="nucleotide sequence ID" value="NC_006513.1"/>
</dbReference>
<dbReference type="SMR" id="Q5P7F0"/>
<dbReference type="STRING" id="76114.ebA1202"/>
<dbReference type="KEGG" id="eba:ebA1202"/>
<dbReference type="eggNOG" id="COG0718">
    <property type="taxonomic scope" value="Bacteria"/>
</dbReference>
<dbReference type="HOGENOM" id="CLU_140930_0_0_4"/>
<dbReference type="OrthoDB" id="9808738at2"/>
<dbReference type="Proteomes" id="UP000006552">
    <property type="component" value="Chromosome"/>
</dbReference>
<dbReference type="GO" id="GO:0043590">
    <property type="term" value="C:bacterial nucleoid"/>
    <property type="evidence" value="ECO:0007669"/>
    <property type="project" value="UniProtKB-UniRule"/>
</dbReference>
<dbReference type="GO" id="GO:0005829">
    <property type="term" value="C:cytosol"/>
    <property type="evidence" value="ECO:0007669"/>
    <property type="project" value="TreeGrafter"/>
</dbReference>
<dbReference type="GO" id="GO:0003677">
    <property type="term" value="F:DNA binding"/>
    <property type="evidence" value="ECO:0007669"/>
    <property type="project" value="UniProtKB-UniRule"/>
</dbReference>
<dbReference type="FunFam" id="3.30.1310.10:FF:000001">
    <property type="entry name" value="Nucleoid-associated protein YbaB"/>
    <property type="match status" value="1"/>
</dbReference>
<dbReference type="Gene3D" id="3.30.1310.10">
    <property type="entry name" value="Nucleoid-associated protein YbaB-like domain"/>
    <property type="match status" value="1"/>
</dbReference>
<dbReference type="HAMAP" id="MF_00274">
    <property type="entry name" value="DNA_YbaB_EbfC"/>
    <property type="match status" value="1"/>
</dbReference>
<dbReference type="InterPro" id="IPR036894">
    <property type="entry name" value="YbaB-like_sf"/>
</dbReference>
<dbReference type="InterPro" id="IPR004401">
    <property type="entry name" value="YbaB/EbfC"/>
</dbReference>
<dbReference type="NCBIfam" id="TIGR00103">
    <property type="entry name" value="DNA_YbaB_EbfC"/>
    <property type="match status" value="1"/>
</dbReference>
<dbReference type="PANTHER" id="PTHR33449">
    <property type="entry name" value="NUCLEOID-ASSOCIATED PROTEIN YBAB"/>
    <property type="match status" value="1"/>
</dbReference>
<dbReference type="PANTHER" id="PTHR33449:SF1">
    <property type="entry name" value="NUCLEOID-ASSOCIATED PROTEIN YBAB"/>
    <property type="match status" value="1"/>
</dbReference>
<dbReference type="Pfam" id="PF02575">
    <property type="entry name" value="YbaB_DNA_bd"/>
    <property type="match status" value="1"/>
</dbReference>
<dbReference type="PIRSF" id="PIRSF004555">
    <property type="entry name" value="UCP004555"/>
    <property type="match status" value="1"/>
</dbReference>
<dbReference type="SUPFAM" id="SSF82607">
    <property type="entry name" value="YbaB-like"/>
    <property type="match status" value="1"/>
</dbReference>
<protein>
    <recommendedName>
        <fullName evidence="1">Nucleoid-associated protein AZOSEA06390</fullName>
    </recommendedName>
</protein>
<sequence length="107" mass="11759">MMKGGIAGLMKQAQQMQENMKKMQDQLASVEVEGQSGAGMVKVLMTCKYDVRRVTIDDSVMDDKEMLEDLLAAAVNDAVRRVETTTQEKMAGFTSGLNLPPGMKLPF</sequence>
<reference key="1">
    <citation type="journal article" date="2005" name="Arch. Microbiol.">
        <title>The genome sequence of an anaerobic aromatic-degrading denitrifying bacterium, strain EbN1.</title>
        <authorList>
            <person name="Rabus R."/>
            <person name="Kube M."/>
            <person name="Heider J."/>
            <person name="Beck A."/>
            <person name="Heitmann K."/>
            <person name="Widdel F."/>
            <person name="Reinhardt R."/>
        </authorList>
    </citation>
    <scope>NUCLEOTIDE SEQUENCE [LARGE SCALE GENOMIC DNA]</scope>
    <source>
        <strain>DSM 19018 / LMG 30748 / EbN1</strain>
    </source>
</reference>
<name>Y639_AROAE</name>
<keyword id="KW-0963">Cytoplasm</keyword>
<keyword id="KW-0238">DNA-binding</keyword>
<keyword id="KW-1185">Reference proteome</keyword>
<feature type="chain" id="PRO_1000003682" description="Nucleoid-associated protein AZOSEA06390">
    <location>
        <begin position="1"/>
        <end position="107"/>
    </location>
</feature>
<proteinExistence type="inferred from homology"/>
<comment type="function">
    <text evidence="1">Binds to DNA and alters its conformation. May be involved in regulation of gene expression, nucleoid organization and DNA protection.</text>
</comment>
<comment type="subunit">
    <text evidence="1">Homodimer.</text>
</comment>
<comment type="subcellular location">
    <subcellularLocation>
        <location evidence="1">Cytoplasm</location>
        <location evidence="1">Nucleoid</location>
    </subcellularLocation>
</comment>
<comment type="similarity">
    <text evidence="1">Belongs to the YbaB/EbfC family.</text>
</comment>
<evidence type="ECO:0000255" key="1">
    <source>
        <dbReference type="HAMAP-Rule" id="MF_00274"/>
    </source>
</evidence>